<evidence type="ECO:0000255" key="1">
    <source>
        <dbReference type="HAMAP-Rule" id="MF_01011"/>
    </source>
</evidence>
<comment type="function">
    <text evidence="1">Dual-specificity methyltransferase that catalyzes the formation of 5-methyluridine at position 54 (m5U54) in all tRNAs, and that of position 341 (m5U341) in tmRNA (transfer-mRNA).</text>
</comment>
<comment type="catalytic activity">
    <reaction evidence="1">
        <text>uridine(54) in tRNA + S-adenosyl-L-methionine = 5-methyluridine(54) in tRNA + S-adenosyl-L-homocysteine + H(+)</text>
        <dbReference type="Rhea" id="RHEA:42712"/>
        <dbReference type="Rhea" id="RHEA-COMP:10167"/>
        <dbReference type="Rhea" id="RHEA-COMP:10193"/>
        <dbReference type="ChEBI" id="CHEBI:15378"/>
        <dbReference type="ChEBI" id="CHEBI:57856"/>
        <dbReference type="ChEBI" id="CHEBI:59789"/>
        <dbReference type="ChEBI" id="CHEBI:65315"/>
        <dbReference type="ChEBI" id="CHEBI:74447"/>
        <dbReference type="EC" id="2.1.1.35"/>
    </reaction>
</comment>
<comment type="catalytic activity">
    <reaction evidence="1">
        <text>uridine(341) in tmRNA + S-adenosyl-L-methionine = 5-methyluridine(341) in tmRNA + S-adenosyl-L-homocysteine + H(+)</text>
        <dbReference type="Rhea" id="RHEA:43612"/>
        <dbReference type="Rhea" id="RHEA-COMP:10630"/>
        <dbReference type="Rhea" id="RHEA-COMP:10631"/>
        <dbReference type="ChEBI" id="CHEBI:15378"/>
        <dbReference type="ChEBI" id="CHEBI:57856"/>
        <dbReference type="ChEBI" id="CHEBI:59789"/>
        <dbReference type="ChEBI" id="CHEBI:65315"/>
        <dbReference type="ChEBI" id="CHEBI:74447"/>
    </reaction>
</comment>
<comment type="similarity">
    <text evidence="1">Belongs to the class I-like SAM-binding methyltransferase superfamily. RNA M5U methyltransferase family. TrmA subfamily.</text>
</comment>
<organism>
    <name type="scientific">Photorhabdus laumondii subsp. laumondii (strain DSM 15139 / CIP 105565 / TT01)</name>
    <name type="common">Photorhabdus luminescens subsp. laumondii</name>
    <dbReference type="NCBI Taxonomy" id="243265"/>
    <lineage>
        <taxon>Bacteria</taxon>
        <taxon>Pseudomonadati</taxon>
        <taxon>Pseudomonadota</taxon>
        <taxon>Gammaproteobacteria</taxon>
        <taxon>Enterobacterales</taxon>
        <taxon>Morganellaceae</taxon>
        <taxon>Photorhabdus</taxon>
    </lineage>
</organism>
<keyword id="KW-0489">Methyltransferase</keyword>
<keyword id="KW-1185">Reference proteome</keyword>
<keyword id="KW-0949">S-adenosyl-L-methionine</keyword>
<keyword id="KW-0808">Transferase</keyword>
<keyword id="KW-0819">tRNA processing</keyword>
<accession>Q7MAX6</accession>
<sequence>MQNLLPTESYEQQLTEKVSRLKNMMAPFQPPRPEVFRSPLSHYRMRAEFRIWHEQDDLYHIMFDQQTKQRIRLVQFPVASKLINKMMVVLIDSIRSEQILCHKLFQIDYLSTCSNKILVSLLYHKKLGEEWTQQALRLREALRHKGFDVELIGRAAKTKITLDHDYIDEVLPVAGRKMIYRQVENSFTQPNASVNIHMLEWAINITKDSKGDLLELYCGNGNFSLALAQNFERVLATEIAKPSVAAAQYNITANGIDNVQIIRMSAEEFTQAMNGEREFNRLQGINLKSYQCETIFVDPPRSGLDEKTLEMVRAYPRILYISCNPETLCHNLETLTQTHKISHLALFDQFPYTHHMECGVLLEKLN</sequence>
<dbReference type="EC" id="2.1.1.-" evidence="1"/>
<dbReference type="EC" id="2.1.1.35" evidence="1"/>
<dbReference type="EMBL" id="BX571874">
    <property type="protein sequence ID" value="CAE17108.1"/>
    <property type="molecule type" value="Genomic_DNA"/>
</dbReference>
<dbReference type="SMR" id="Q7MAX6"/>
<dbReference type="STRING" id="243265.plu4736"/>
<dbReference type="KEGG" id="plu:plu4736"/>
<dbReference type="eggNOG" id="COG2265">
    <property type="taxonomic scope" value="Bacteria"/>
</dbReference>
<dbReference type="HOGENOM" id="CLU_043022_0_0_6"/>
<dbReference type="Proteomes" id="UP000002514">
    <property type="component" value="Chromosome"/>
</dbReference>
<dbReference type="GO" id="GO:0005829">
    <property type="term" value="C:cytosol"/>
    <property type="evidence" value="ECO:0007669"/>
    <property type="project" value="TreeGrafter"/>
</dbReference>
<dbReference type="GO" id="GO:0019843">
    <property type="term" value="F:rRNA binding"/>
    <property type="evidence" value="ECO:0007669"/>
    <property type="project" value="TreeGrafter"/>
</dbReference>
<dbReference type="GO" id="GO:0030697">
    <property type="term" value="F:tRNA (uracil(54)-C5)-methyltransferase activity, S-adenosyl methionine-dependent"/>
    <property type="evidence" value="ECO:0007669"/>
    <property type="project" value="UniProtKB-UniRule"/>
</dbReference>
<dbReference type="GO" id="GO:0000049">
    <property type="term" value="F:tRNA binding"/>
    <property type="evidence" value="ECO:0007669"/>
    <property type="project" value="TreeGrafter"/>
</dbReference>
<dbReference type="GO" id="GO:0030488">
    <property type="term" value="P:tRNA methylation"/>
    <property type="evidence" value="ECO:0007669"/>
    <property type="project" value="UniProtKB-UniRule"/>
</dbReference>
<dbReference type="CDD" id="cd02440">
    <property type="entry name" value="AdoMet_MTases"/>
    <property type="match status" value="1"/>
</dbReference>
<dbReference type="FunFam" id="2.40.50.1070:FF:000001">
    <property type="entry name" value="tRNA/tmRNA (uracil-C(5))-methyltransferase"/>
    <property type="match status" value="1"/>
</dbReference>
<dbReference type="FunFam" id="3.40.50.150:FF:000012">
    <property type="entry name" value="tRNA/tmRNA (uracil-C(5))-methyltransferase"/>
    <property type="match status" value="1"/>
</dbReference>
<dbReference type="Gene3D" id="2.40.50.1070">
    <property type="match status" value="1"/>
</dbReference>
<dbReference type="Gene3D" id="3.40.50.150">
    <property type="entry name" value="Vaccinia Virus protein VP39"/>
    <property type="match status" value="1"/>
</dbReference>
<dbReference type="HAMAP" id="MF_01011">
    <property type="entry name" value="RNA_methyltr_TrmA"/>
    <property type="match status" value="1"/>
</dbReference>
<dbReference type="InterPro" id="IPR030390">
    <property type="entry name" value="MeTrfase_TrmA_AS"/>
</dbReference>
<dbReference type="InterPro" id="IPR030391">
    <property type="entry name" value="MeTrfase_TrmA_CS"/>
</dbReference>
<dbReference type="InterPro" id="IPR029063">
    <property type="entry name" value="SAM-dependent_MTases_sf"/>
</dbReference>
<dbReference type="InterPro" id="IPR011869">
    <property type="entry name" value="TrmA_MeTrfase"/>
</dbReference>
<dbReference type="InterPro" id="IPR010280">
    <property type="entry name" value="U5_MeTrfase_fam"/>
</dbReference>
<dbReference type="NCBIfam" id="TIGR02143">
    <property type="entry name" value="trmA_only"/>
    <property type="match status" value="1"/>
</dbReference>
<dbReference type="PANTHER" id="PTHR47790">
    <property type="entry name" value="TRNA/TMRNA (URACIL-C(5))-METHYLTRANSFERASE"/>
    <property type="match status" value="1"/>
</dbReference>
<dbReference type="PANTHER" id="PTHR47790:SF2">
    <property type="entry name" value="TRNA_TMRNA (URACIL-C(5))-METHYLTRANSFERASE"/>
    <property type="match status" value="1"/>
</dbReference>
<dbReference type="Pfam" id="PF05958">
    <property type="entry name" value="tRNA_U5-meth_tr"/>
    <property type="match status" value="1"/>
</dbReference>
<dbReference type="SUPFAM" id="SSF53335">
    <property type="entry name" value="S-adenosyl-L-methionine-dependent methyltransferases"/>
    <property type="match status" value="1"/>
</dbReference>
<dbReference type="PROSITE" id="PS51687">
    <property type="entry name" value="SAM_MT_RNA_M5U"/>
    <property type="match status" value="1"/>
</dbReference>
<dbReference type="PROSITE" id="PS01230">
    <property type="entry name" value="TRMA_1"/>
    <property type="match status" value="1"/>
</dbReference>
<dbReference type="PROSITE" id="PS01231">
    <property type="entry name" value="TRMA_2"/>
    <property type="match status" value="1"/>
</dbReference>
<protein>
    <recommendedName>
        <fullName evidence="1">tRNA/tmRNA (uracil-C(5))-methyltransferase</fullName>
        <ecNumber evidence="1">2.1.1.-</ecNumber>
        <ecNumber evidence="1">2.1.1.35</ecNumber>
    </recommendedName>
    <alternativeName>
        <fullName evidence="1">tRNA (uracil(54)-C(5))-methyltransferase</fullName>
    </alternativeName>
    <alternativeName>
        <fullName evidence="1">tRNA(m5U54)-methyltransferase</fullName>
        <shortName evidence="1">RUMT</shortName>
    </alternativeName>
    <alternativeName>
        <fullName evidence="1">tmRNA (uracil(341)-C(5))-methyltransferase</fullName>
    </alternativeName>
</protein>
<feature type="chain" id="PRO_0000161870" description="tRNA/tmRNA (uracil-C(5))-methyltransferase">
    <location>
        <begin position="1"/>
        <end position="366"/>
    </location>
</feature>
<feature type="active site" description="Nucleophile" evidence="1">
    <location>
        <position position="323"/>
    </location>
</feature>
<feature type="active site" description="Proton acceptor" evidence="1">
    <location>
        <position position="357"/>
    </location>
</feature>
<feature type="binding site" evidence="1">
    <location>
        <position position="189"/>
    </location>
    <ligand>
        <name>S-adenosyl-L-methionine</name>
        <dbReference type="ChEBI" id="CHEBI:59789"/>
    </ligand>
</feature>
<feature type="binding site" evidence="1">
    <location>
        <position position="217"/>
    </location>
    <ligand>
        <name>S-adenosyl-L-methionine</name>
        <dbReference type="ChEBI" id="CHEBI:59789"/>
    </ligand>
</feature>
<feature type="binding site" evidence="1">
    <location>
        <position position="222"/>
    </location>
    <ligand>
        <name>S-adenosyl-L-methionine</name>
        <dbReference type="ChEBI" id="CHEBI:59789"/>
    </ligand>
</feature>
<feature type="binding site" evidence="1">
    <location>
        <position position="238"/>
    </location>
    <ligand>
        <name>S-adenosyl-L-methionine</name>
        <dbReference type="ChEBI" id="CHEBI:59789"/>
    </ligand>
</feature>
<feature type="binding site" evidence="1">
    <location>
        <position position="298"/>
    </location>
    <ligand>
        <name>S-adenosyl-L-methionine</name>
        <dbReference type="ChEBI" id="CHEBI:59789"/>
    </ligand>
</feature>
<gene>
    <name evidence="1" type="primary">trmA</name>
    <name type="ordered locus">plu4736</name>
</gene>
<reference key="1">
    <citation type="journal article" date="2003" name="Nat. Biotechnol.">
        <title>The genome sequence of the entomopathogenic bacterium Photorhabdus luminescens.</title>
        <authorList>
            <person name="Duchaud E."/>
            <person name="Rusniok C."/>
            <person name="Frangeul L."/>
            <person name="Buchrieser C."/>
            <person name="Givaudan A."/>
            <person name="Taourit S."/>
            <person name="Bocs S."/>
            <person name="Boursaux-Eude C."/>
            <person name="Chandler M."/>
            <person name="Charles J.-F."/>
            <person name="Dassa E."/>
            <person name="Derose R."/>
            <person name="Derzelle S."/>
            <person name="Freyssinet G."/>
            <person name="Gaudriault S."/>
            <person name="Medigue C."/>
            <person name="Lanois A."/>
            <person name="Powell K."/>
            <person name="Siguier P."/>
            <person name="Vincent R."/>
            <person name="Wingate V."/>
            <person name="Zouine M."/>
            <person name="Glaser P."/>
            <person name="Boemare N."/>
            <person name="Danchin A."/>
            <person name="Kunst F."/>
        </authorList>
    </citation>
    <scope>NUCLEOTIDE SEQUENCE [LARGE SCALE GENOMIC DNA]</scope>
    <source>
        <strain>DSM 15139 / CIP 105565 / TT01</strain>
    </source>
</reference>
<proteinExistence type="inferred from homology"/>
<name>TRMA_PHOLL</name>